<name>RBL_EUGMY</name>
<feature type="chain" id="PRO_0000062468" description="Ribulose bisphosphate carboxylase large chain">
    <location>
        <begin position="1" status="less than"/>
        <end position="436" status="greater than"/>
    </location>
</feature>
<feature type="active site" description="Proton acceptor" evidence="1">
    <location>
        <position position="156"/>
    </location>
</feature>
<feature type="active site" description="Proton acceptor" evidence="1">
    <location>
        <position position="275"/>
    </location>
</feature>
<feature type="binding site" description="in homodimeric partner" evidence="1">
    <location>
        <position position="104"/>
    </location>
    <ligand>
        <name>substrate</name>
    </ligand>
</feature>
<feature type="binding site" evidence="1">
    <location>
        <position position="154"/>
    </location>
    <ligand>
        <name>substrate</name>
    </ligand>
</feature>
<feature type="binding site" evidence="1">
    <location>
        <position position="158"/>
    </location>
    <ligand>
        <name>substrate</name>
    </ligand>
</feature>
<feature type="binding site" description="via carbamate group" evidence="1">
    <location>
        <position position="182"/>
    </location>
    <ligand>
        <name>Mg(2+)</name>
        <dbReference type="ChEBI" id="CHEBI:18420"/>
    </ligand>
</feature>
<feature type="binding site" evidence="1">
    <location>
        <position position="184"/>
    </location>
    <ligand>
        <name>Mg(2+)</name>
        <dbReference type="ChEBI" id="CHEBI:18420"/>
    </ligand>
</feature>
<feature type="binding site" evidence="1">
    <location>
        <position position="185"/>
    </location>
    <ligand>
        <name>Mg(2+)</name>
        <dbReference type="ChEBI" id="CHEBI:18420"/>
    </ligand>
</feature>
<feature type="binding site" evidence="1">
    <location>
        <position position="276"/>
    </location>
    <ligand>
        <name>substrate</name>
    </ligand>
</feature>
<feature type="binding site" evidence="1">
    <location>
        <position position="308"/>
    </location>
    <ligand>
        <name>substrate</name>
    </ligand>
</feature>
<feature type="binding site" evidence="1">
    <location>
        <position position="360"/>
    </location>
    <ligand>
        <name>substrate</name>
    </ligand>
</feature>
<feature type="site" description="Transition state stabilizer" evidence="1">
    <location>
        <position position="315"/>
    </location>
</feature>
<feature type="modified residue" description="N6-carboxylysine" evidence="1">
    <location>
        <position position="182"/>
    </location>
</feature>
<feature type="non-terminal residue">
    <location>
        <position position="1"/>
    </location>
</feature>
<feature type="non-terminal residue">
    <location>
        <position position="436"/>
    </location>
</feature>
<evidence type="ECO:0000255" key="1">
    <source>
        <dbReference type="HAMAP-Rule" id="MF_01338"/>
    </source>
</evidence>
<protein>
    <recommendedName>
        <fullName evidence="1">Ribulose bisphosphate carboxylase large chain</fullName>
        <shortName evidence="1">RuBisCO large subunit</shortName>
        <ecNumber evidence="1">4.1.1.39</ecNumber>
    </recommendedName>
</protein>
<sequence>YRLTYYTPDYQVAETDILAAFRMTPQPGVPAEECGAAVAAESSTGTWTTVWTDGLTQLDRYKGRCYDLEPVPGETNQYIAYVAYPIDLFEEGSVTNLLTSIVGNVFGFKALRALRLEDLRIPPAYVKTFWGPPHGIQVERDRLNKYGRPLLGCTIKPKLGLSAKNYGRAVYECLRGGLDFTKDDENVNSQSFMRWRDRFLFCAEAIYKAQSETGEVKGHYLNATAGTVEEMYKRAAFAAQLGVPIIMHDYLTGGFTANTSLAMYCRDNGLLLHIHRAMHAVIDRQRYHGIHFRVLAKTLRMSGGDHLHSGTVVGKLEGEREVTLGFVDLMRDAYVEKDRSRGIYFTQDWCGMGGTIPVASGGIHVWHMPALTEIFGDDACLQFGGGTLGHPWGNAPGAVANRVASEACVQARNEGRDLSREGGDVIREACKWSPEL</sequence>
<dbReference type="EC" id="4.1.1.39" evidence="1"/>
<dbReference type="EMBL" id="U21007">
    <property type="protein sequence ID" value="AAA91980.1"/>
    <property type="molecule type" value="mRNA"/>
</dbReference>
<dbReference type="PIR" id="S66169">
    <property type="entry name" value="S66169"/>
</dbReference>
<dbReference type="SMR" id="P48072"/>
<dbReference type="GO" id="GO:0009507">
    <property type="term" value="C:chloroplast"/>
    <property type="evidence" value="ECO:0007669"/>
    <property type="project" value="UniProtKB-SubCell"/>
</dbReference>
<dbReference type="GO" id="GO:0000287">
    <property type="term" value="F:magnesium ion binding"/>
    <property type="evidence" value="ECO:0007669"/>
    <property type="project" value="InterPro"/>
</dbReference>
<dbReference type="GO" id="GO:0004497">
    <property type="term" value="F:monooxygenase activity"/>
    <property type="evidence" value="ECO:0007669"/>
    <property type="project" value="UniProtKB-KW"/>
</dbReference>
<dbReference type="GO" id="GO:0016984">
    <property type="term" value="F:ribulose-bisphosphate carboxylase activity"/>
    <property type="evidence" value="ECO:0007669"/>
    <property type="project" value="UniProtKB-EC"/>
</dbReference>
<dbReference type="GO" id="GO:0009853">
    <property type="term" value="P:photorespiration"/>
    <property type="evidence" value="ECO:0007669"/>
    <property type="project" value="UniProtKB-KW"/>
</dbReference>
<dbReference type="GO" id="GO:0019253">
    <property type="term" value="P:reductive pentose-phosphate cycle"/>
    <property type="evidence" value="ECO:0007669"/>
    <property type="project" value="UniProtKB-KW"/>
</dbReference>
<dbReference type="CDD" id="cd08212">
    <property type="entry name" value="RuBisCO_large_I"/>
    <property type="match status" value="1"/>
</dbReference>
<dbReference type="Gene3D" id="3.20.20.110">
    <property type="entry name" value="Ribulose bisphosphate carboxylase, large subunit, C-terminal domain"/>
    <property type="match status" value="1"/>
</dbReference>
<dbReference type="Gene3D" id="3.30.70.150">
    <property type="entry name" value="RuBisCO large subunit, N-terminal domain"/>
    <property type="match status" value="1"/>
</dbReference>
<dbReference type="HAMAP" id="MF_01338">
    <property type="entry name" value="RuBisCO_L_type1"/>
    <property type="match status" value="1"/>
</dbReference>
<dbReference type="InterPro" id="IPR033966">
    <property type="entry name" value="RuBisCO"/>
</dbReference>
<dbReference type="InterPro" id="IPR020878">
    <property type="entry name" value="RuBisCo_large_chain_AS"/>
</dbReference>
<dbReference type="InterPro" id="IPR000685">
    <property type="entry name" value="RuBisCO_lsu_C"/>
</dbReference>
<dbReference type="InterPro" id="IPR036376">
    <property type="entry name" value="RuBisCO_lsu_C_sf"/>
</dbReference>
<dbReference type="InterPro" id="IPR017443">
    <property type="entry name" value="RuBisCO_lsu_fd_N"/>
</dbReference>
<dbReference type="InterPro" id="IPR036422">
    <property type="entry name" value="RuBisCO_lsu_N_sf"/>
</dbReference>
<dbReference type="InterPro" id="IPR020888">
    <property type="entry name" value="RuBisCO_lsuI"/>
</dbReference>
<dbReference type="NCBIfam" id="NF003252">
    <property type="entry name" value="PRK04208.1"/>
    <property type="match status" value="1"/>
</dbReference>
<dbReference type="PANTHER" id="PTHR42704">
    <property type="entry name" value="RIBULOSE BISPHOSPHATE CARBOXYLASE"/>
    <property type="match status" value="1"/>
</dbReference>
<dbReference type="PANTHER" id="PTHR42704:SF17">
    <property type="entry name" value="RIBULOSE BISPHOSPHATE CARBOXYLASE LARGE CHAIN"/>
    <property type="match status" value="1"/>
</dbReference>
<dbReference type="Pfam" id="PF00016">
    <property type="entry name" value="RuBisCO_large"/>
    <property type="match status" value="1"/>
</dbReference>
<dbReference type="Pfam" id="PF02788">
    <property type="entry name" value="RuBisCO_large_N"/>
    <property type="match status" value="1"/>
</dbReference>
<dbReference type="SFLD" id="SFLDG01052">
    <property type="entry name" value="RuBisCO"/>
    <property type="match status" value="1"/>
</dbReference>
<dbReference type="SFLD" id="SFLDS00014">
    <property type="entry name" value="RuBisCO"/>
    <property type="match status" value="1"/>
</dbReference>
<dbReference type="SFLD" id="SFLDG00301">
    <property type="entry name" value="RuBisCO-like_proteins"/>
    <property type="match status" value="1"/>
</dbReference>
<dbReference type="SUPFAM" id="SSF51649">
    <property type="entry name" value="RuBisCo, C-terminal domain"/>
    <property type="match status" value="1"/>
</dbReference>
<dbReference type="SUPFAM" id="SSF54966">
    <property type="entry name" value="RuBisCO, large subunit, small (N-terminal) domain"/>
    <property type="match status" value="1"/>
</dbReference>
<dbReference type="PROSITE" id="PS00157">
    <property type="entry name" value="RUBISCO_LARGE"/>
    <property type="match status" value="1"/>
</dbReference>
<comment type="function">
    <text evidence="1">RuBisCO catalyzes two reactions: the carboxylation of D-ribulose 1,5-bisphosphate, the primary event in carbon dioxide fixation, as well as the oxidative fragmentation of the pentose substrate in the photorespiration process. Both reactions occur simultaneously and in competition at the same active site.</text>
</comment>
<comment type="catalytic activity">
    <reaction evidence="1">
        <text>2 (2R)-3-phosphoglycerate + 2 H(+) = D-ribulose 1,5-bisphosphate + CO2 + H2O</text>
        <dbReference type="Rhea" id="RHEA:23124"/>
        <dbReference type="ChEBI" id="CHEBI:15377"/>
        <dbReference type="ChEBI" id="CHEBI:15378"/>
        <dbReference type="ChEBI" id="CHEBI:16526"/>
        <dbReference type="ChEBI" id="CHEBI:57870"/>
        <dbReference type="ChEBI" id="CHEBI:58272"/>
        <dbReference type="EC" id="4.1.1.39"/>
    </reaction>
</comment>
<comment type="catalytic activity">
    <reaction evidence="1">
        <text>D-ribulose 1,5-bisphosphate + O2 = 2-phosphoglycolate + (2R)-3-phosphoglycerate + 2 H(+)</text>
        <dbReference type="Rhea" id="RHEA:36631"/>
        <dbReference type="ChEBI" id="CHEBI:15378"/>
        <dbReference type="ChEBI" id="CHEBI:15379"/>
        <dbReference type="ChEBI" id="CHEBI:57870"/>
        <dbReference type="ChEBI" id="CHEBI:58033"/>
        <dbReference type="ChEBI" id="CHEBI:58272"/>
    </reaction>
</comment>
<comment type="cofactor">
    <cofactor evidence="1">
        <name>Mg(2+)</name>
        <dbReference type="ChEBI" id="CHEBI:18420"/>
    </cofactor>
    <text evidence="1">Binds 1 Mg(2+) ion per subunit.</text>
</comment>
<comment type="subunit">
    <text evidence="1">Heterohexadecamer of 8 large chains and 8 small chains.</text>
</comment>
<comment type="subcellular location">
    <subcellularLocation>
        <location>Plastid</location>
        <location>Chloroplast</location>
    </subcellularLocation>
</comment>
<comment type="miscellaneous">
    <text evidence="1">The basic functional RuBisCO is composed of a large chain homodimer in a 'head-to-tail' conformation. In form I RuBisCO this homodimer is arranged in a barrel-like tetramer with the small subunits forming a tetrameric 'cap' on each end of the 'barrel'.</text>
</comment>
<comment type="similarity">
    <text evidence="1">Belongs to the RuBisCO large chain family. Type I subfamily.</text>
</comment>
<geneLocation type="chloroplast"/>
<accession>P48072</accession>
<organism>
    <name type="scientific">Euglena myxocylindracea</name>
    <dbReference type="NCBI Taxonomy" id="38276"/>
    <lineage>
        <taxon>Eukaryota</taxon>
        <taxon>Discoba</taxon>
        <taxon>Euglenozoa</taxon>
        <taxon>Euglenida</taxon>
        <taxon>Spirocuta</taxon>
        <taxon>Euglenophyceae</taxon>
        <taxon>Euglenales</taxon>
        <taxon>Euglenaceae</taxon>
        <taxon>Euglena</taxon>
    </lineage>
</organism>
<proteinExistence type="evidence at transcript level"/>
<reference key="1">
    <citation type="journal article" date="1995" name="Nucleic Acids Res.">
        <title>Evidence for the late origin of introns in chloroplast genes from an evolutionary analysis of the genus Euglena.</title>
        <authorList>
            <person name="Thompson M.D."/>
            <person name="Copertino D.W."/>
            <person name="Thompson E."/>
            <person name="Favreau M.R."/>
            <person name="Hallick R.B."/>
        </authorList>
    </citation>
    <scope>NUCLEOTIDE SEQUENCE [MRNA]</scope>
    <source>
        <strain>UTEX 1989</strain>
    </source>
</reference>
<keyword id="KW-0113">Calvin cycle</keyword>
<keyword id="KW-0120">Carbon dioxide fixation</keyword>
<keyword id="KW-0150">Chloroplast</keyword>
<keyword id="KW-0456">Lyase</keyword>
<keyword id="KW-0460">Magnesium</keyword>
<keyword id="KW-0479">Metal-binding</keyword>
<keyword id="KW-0503">Monooxygenase</keyword>
<keyword id="KW-0560">Oxidoreductase</keyword>
<keyword id="KW-0601">Photorespiration</keyword>
<keyword id="KW-0602">Photosynthesis</keyword>
<keyword id="KW-0934">Plastid</keyword>
<gene>
    <name evidence="1" type="primary">rbcL</name>
</gene>